<dbReference type="EC" id="2.7.6.1" evidence="1"/>
<dbReference type="EMBL" id="BA000023">
    <property type="protein sequence ID" value="BAK54418.1"/>
    <property type="molecule type" value="Genomic_DNA"/>
</dbReference>
<dbReference type="RefSeq" id="WP_010978942.1">
    <property type="nucleotide sequence ID" value="NC_003106.2"/>
</dbReference>
<dbReference type="SMR" id="Q973F3"/>
<dbReference type="STRING" id="273063.STK_09460"/>
<dbReference type="KEGG" id="sto:STK_09460"/>
<dbReference type="PATRIC" id="fig|273063.9.peg.1058"/>
<dbReference type="eggNOG" id="arCOG00067">
    <property type="taxonomic scope" value="Archaea"/>
</dbReference>
<dbReference type="OrthoDB" id="371997at2157"/>
<dbReference type="UniPathway" id="UPA00087">
    <property type="reaction ID" value="UER00172"/>
</dbReference>
<dbReference type="Proteomes" id="UP000001015">
    <property type="component" value="Chromosome"/>
</dbReference>
<dbReference type="GO" id="GO:0005737">
    <property type="term" value="C:cytoplasm"/>
    <property type="evidence" value="ECO:0007669"/>
    <property type="project" value="UniProtKB-SubCell"/>
</dbReference>
<dbReference type="GO" id="GO:0002189">
    <property type="term" value="C:ribose phosphate diphosphokinase complex"/>
    <property type="evidence" value="ECO:0007669"/>
    <property type="project" value="TreeGrafter"/>
</dbReference>
<dbReference type="GO" id="GO:0005524">
    <property type="term" value="F:ATP binding"/>
    <property type="evidence" value="ECO:0007669"/>
    <property type="project" value="UniProtKB-KW"/>
</dbReference>
<dbReference type="GO" id="GO:0016301">
    <property type="term" value="F:kinase activity"/>
    <property type="evidence" value="ECO:0007669"/>
    <property type="project" value="UniProtKB-KW"/>
</dbReference>
<dbReference type="GO" id="GO:0000287">
    <property type="term" value="F:magnesium ion binding"/>
    <property type="evidence" value="ECO:0007669"/>
    <property type="project" value="UniProtKB-UniRule"/>
</dbReference>
<dbReference type="GO" id="GO:0004749">
    <property type="term" value="F:ribose phosphate diphosphokinase activity"/>
    <property type="evidence" value="ECO:0007669"/>
    <property type="project" value="UniProtKB-UniRule"/>
</dbReference>
<dbReference type="GO" id="GO:0006015">
    <property type="term" value="P:5-phosphoribose 1-diphosphate biosynthetic process"/>
    <property type="evidence" value="ECO:0007669"/>
    <property type="project" value="UniProtKB-UniRule"/>
</dbReference>
<dbReference type="GO" id="GO:0006164">
    <property type="term" value="P:purine nucleotide biosynthetic process"/>
    <property type="evidence" value="ECO:0007669"/>
    <property type="project" value="TreeGrafter"/>
</dbReference>
<dbReference type="CDD" id="cd06223">
    <property type="entry name" value="PRTases_typeI"/>
    <property type="match status" value="1"/>
</dbReference>
<dbReference type="FunFam" id="3.40.50.2020:FF:000074">
    <property type="entry name" value="Ribose-phosphate pyrophosphokinase"/>
    <property type="match status" value="1"/>
</dbReference>
<dbReference type="Gene3D" id="3.40.50.2020">
    <property type="match status" value="2"/>
</dbReference>
<dbReference type="HAMAP" id="MF_00583_A">
    <property type="entry name" value="RibP_PPkinase_A"/>
    <property type="match status" value="1"/>
</dbReference>
<dbReference type="InterPro" id="IPR029099">
    <property type="entry name" value="Pribosyltran_N"/>
</dbReference>
<dbReference type="InterPro" id="IPR000836">
    <property type="entry name" value="PRibTrfase_dom"/>
</dbReference>
<dbReference type="InterPro" id="IPR029057">
    <property type="entry name" value="PRTase-like"/>
</dbReference>
<dbReference type="InterPro" id="IPR005946">
    <property type="entry name" value="Rib-P_diPkinase"/>
</dbReference>
<dbReference type="InterPro" id="IPR037514">
    <property type="entry name" value="Rib-P_diPkinase_arc"/>
</dbReference>
<dbReference type="NCBIfam" id="NF002095">
    <property type="entry name" value="PRK00934.1"/>
    <property type="match status" value="1"/>
</dbReference>
<dbReference type="NCBIfam" id="TIGR01251">
    <property type="entry name" value="ribP_PPkin"/>
    <property type="match status" value="1"/>
</dbReference>
<dbReference type="PANTHER" id="PTHR10210">
    <property type="entry name" value="RIBOSE-PHOSPHATE DIPHOSPHOKINASE FAMILY MEMBER"/>
    <property type="match status" value="1"/>
</dbReference>
<dbReference type="PANTHER" id="PTHR10210:SF32">
    <property type="entry name" value="RIBOSE-PHOSPHATE PYROPHOSPHOKINASE 2"/>
    <property type="match status" value="1"/>
</dbReference>
<dbReference type="Pfam" id="PF00156">
    <property type="entry name" value="Pribosyltran"/>
    <property type="match status" value="1"/>
</dbReference>
<dbReference type="Pfam" id="PF13793">
    <property type="entry name" value="Pribosyltran_N"/>
    <property type="match status" value="1"/>
</dbReference>
<dbReference type="SMART" id="SM01400">
    <property type="entry name" value="Pribosyltran_N"/>
    <property type="match status" value="1"/>
</dbReference>
<dbReference type="SUPFAM" id="SSF53271">
    <property type="entry name" value="PRTase-like"/>
    <property type="match status" value="1"/>
</dbReference>
<reference key="1">
    <citation type="journal article" date="2001" name="DNA Res.">
        <title>Complete genome sequence of an aerobic thermoacidophilic Crenarchaeon, Sulfolobus tokodaii strain7.</title>
        <authorList>
            <person name="Kawarabayasi Y."/>
            <person name="Hino Y."/>
            <person name="Horikawa H."/>
            <person name="Jin-no K."/>
            <person name="Takahashi M."/>
            <person name="Sekine M."/>
            <person name="Baba S."/>
            <person name="Ankai A."/>
            <person name="Kosugi H."/>
            <person name="Hosoyama A."/>
            <person name="Fukui S."/>
            <person name="Nagai Y."/>
            <person name="Nishijima K."/>
            <person name="Otsuka R."/>
            <person name="Nakazawa H."/>
            <person name="Takamiya M."/>
            <person name="Kato Y."/>
            <person name="Yoshizawa T."/>
            <person name="Tanaka T."/>
            <person name="Kudoh Y."/>
            <person name="Yamazaki J."/>
            <person name="Kushida N."/>
            <person name="Oguchi A."/>
            <person name="Aoki K."/>
            <person name="Masuda S."/>
            <person name="Yanagii M."/>
            <person name="Nishimura M."/>
            <person name="Yamagishi A."/>
            <person name="Oshima T."/>
            <person name="Kikuchi H."/>
        </authorList>
    </citation>
    <scope>NUCLEOTIDE SEQUENCE [LARGE SCALE GENOMIC DNA]</scope>
    <source>
        <strain>DSM 16993 / JCM 10545 / NBRC 100140 / 7</strain>
    </source>
</reference>
<feature type="chain" id="PRO_0000141249" description="Ribose-phosphate pyrophosphokinase">
    <location>
        <begin position="1"/>
        <end position="291"/>
    </location>
</feature>
<feature type="active site" evidence="1">
    <location>
        <position position="188"/>
    </location>
</feature>
<feature type="binding site" evidence="1">
    <location>
        <begin position="34"/>
        <end position="36"/>
    </location>
    <ligand>
        <name>ATP</name>
        <dbReference type="ChEBI" id="CHEBI:30616"/>
    </ligand>
</feature>
<feature type="binding site" evidence="1">
    <location>
        <begin position="93"/>
        <end position="94"/>
    </location>
    <ligand>
        <name>ATP</name>
        <dbReference type="ChEBI" id="CHEBI:30616"/>
    </ligand>
</feature>
<feature type="binding site" evidence="1">
    <location>
        <position position="127"/>
    </location>
    <ligand>
        <name>Mg(2+)</name>
        <dbReference type="ChEBI" id="CHEBI:18420"/>
        <label>1</label>
    </ligand>
</feature>
<feature type="binding site" evidence="1">
    <location>
        <position position="165"/>
    </location>
    <ligand>
        <name>Mg(2+)</name>
        <dbReference type="ChEBI" id="CHEBI:18420"/>
        <label>2</label>
    </ligand>
</feature>
<feature type="binding site" evidence="1">
    <location>
        <position position="190"/>
    </location>
    <ligand>
        <name>D-ribose 5-phosphate</name>
        <dbReference type="ChEBI" id="CHEBI:78346"/>
    </ligand>
</feature>
<feature type="binding site" evidence="1">
    <location>
        <position position="216"/>
    </location>
    <ligand>
        <name>D-ribose 5-phosphate</name>
        <dbReference type="ChEBI" id="CHEBI:78346"/>
    </ligand>
</feature>
<feature type="binding site" evidence="1">
    <location>
        <begin position="220"/>
        <end position="224"/>
    </location>
    <ligand>
        <name>D-ribose 5-phosphate</name>
        <dbReference type="ChEBI" id="CHEBI:78346"/>
    </ligand>
</feature>
<sequence length="291" mass="32427">MIIIGGTATNGIDENLSKIISVPLLKVEHKVFPDGESYIRIPQHITNQEILVVQSLYPPQDKHFVELLLILETLADMKNNKITAIVPYLAYSRQDRRFKEGEALSIKTILNAIARAGADVLIVIEPHKEEELSYFGKEVKIADPMPELAKEVSKKVEKPFVLAPDRGALERAKRLAEQLNAEYSYIEKERDRDTGEVRIKNLPELRLSGKDVIIVDDIISTGGTMIQATRAAYEHGARKVISVAVHSLFLDNAYEKLINSGVKEIVTTNTIPQDPSKVTVVDVSPAIARKI</sequence>
<evidence type="ECO:0000255" key="1">
    <source>
        <dbReference type="HAMAP-Rule" id="MF_00583"/>
    </source>
</evidence>
<keyword id="KW-0067">ATP-binding</keyword>
<keyword id="KW-0963">Cytoplasm</keyword>
<keyword id="KW-0418">Kinase</keyword>
<keyword id="KW-0460">Magnesium</keyword>
<keyword id="KW-0479">Metal-binding</keyword>
<keyword id="KW-0545">Nucleotide biosynthesis</keyword>
<keyword id="KW-0547">Nucleotide-binding</keyword>
<keyword id="KW-1185">Reference proteome</keyword>
<keyword id="KW-0808">Transferase</keyword>
<proteinExistence type="inferred from homology"/>
<organism>
    <name type="scientific">Sulfurisphaera tokodaii (strain DSM 16993 / JCM 10545 / NBRC 100140 / 7)</name>
    <name type="common">Sulfolobus tokodaii</name>
    <dbReference type="NCBI Taxonomy" id="273063"/>
    <lineage>
        <taxon>Archaea</taxon>
        <taxon>Thermoproteota</taxon>
        <taxon>Thermoprotei</taxon>
        <taxon>Sulfolobales</taxon>
        <taxon>Sulfolobaceae</taxon>
        <taxon>Sulfurisphaera</taxon>
    </lineage>
</organism>
<gene>
    <name evidence="1" type="primary">prs</name>
    <name type="ordered locus">STK_09460</name>
</gene>
<protein>
    <recommendedName>
        <fullName evidence="1">Ribose-phosphate pyrophosphokinase</fullName>
        <shortName evidence="1">RPPK</shortName>
        <ecNumber evidence="1">2.7.6.1</ecNumber>
    </recommendedName>
    <alternativeName>
        <fullName evidence="1">5-phospho-D-ribosyl alpha-1-diphosphate synthase</fullName>
    </alternativeName>
    <alternativeName>
        <fullName evidence="1">Phosphoribosyl diphosphate synthase</fullName>
    </alternativeName>
    <alternativeName>
        <fullName evidence="1">Phosphoribosyl pyrophosphate synthase</fullName>
        <shortName evidence="1">P-Rib-PP synthase</shortName>
        <shortName evidence="1">PRPP synthase</shortName>
        <shortName evidence="1">PRPPase</shortName>
    </alternativeName>
</protein>
<accession>Q973F3</accession>
<accession>F9VNC1</accession>
<name>KPRS_SULTO</name>
<comment type="function">
    <text evidence="1">Involved in the biosynthesis of the central metabolite phospho-alpha-D-ribosyl-1-pyrophosphate (PRPP) via the transfer of pyrophosphoryl group from ATP to 1-hydroxyl of ribose-5-phosphate (Rib-5-P).</text>
</comment>
<comment type="catalytic activity">
    <reaction evidence="1">
        <text>D-ribose 5-phosphate + ATP = 5-phospho-alpha-D-ribose 1-diphosphate + AMP + H(+)</text>
        <dbReference type="Rhea" id="RHEA:15609"/>
        <dbReference type="ChEBI" id="CHEBI:15378"/>
        <dbReference type="ChEBI" id="CHEBI:30616"/>
        <dbReference type="ChEBI" id="CHEBI:58017"/>
        <dbReference type="ChEBI" id="CHEBI:78346"/>
        <dbReference type="ChEBI" id="CHEBI:456215"/>
        <dbReference type="EC" id="2.7.6.1"/>
    </reaction>
</comment>
<comment type="cofactor">
    <cofactor evidence="1">
        <name>Mg(2+)</name>
        <dbReference type="ChEBI" id="CHEBI:18420"/>
    </cofactor>
    <text evidence="1">Binds 2 Mg(2+) ions per subunit.</text>
</comment>
<comment type="pathway">
    <text evidence="1">Metabolic intermediate biosynthesis; 5-phospho-alpha-D-ribose 1-diphosphate biosynthesis; 5-phospho-alpha-D-ribose 1-diphosphate from D-ribose 5-phosphate (route I): step 1/1.</text>
</comment>
<comment type="subcellular location">
    <subcellularLocation>
        <location evidence="1">Cytoplasm</location>
    </subcellularLocation>
</comment>
<comment type="similarity">
    <text evidence="1">Belongs to the ribose-phosphate pyrophosphokinase family. Class III (archaeal) subfamily.</text>
</comment>